<sequence length="138" mass="14853">MAKSPPRSGSRRPGRIGSRKSGRRIPKGVIHVQASFNNTIVTVTDVRGRVISWSSAGTCGFRGTRRGTPFAAQTAAGNAIRAVADQGMQRAEVMIKGPGLGRDAALRAIRRSGILLNFVRDVTPMPHNGCRPPKKRRV</sequence>
<geneLocation type="chloroplast"/>
<organism>
    <name type="scientific">Citrus sinensis</name>
    <name type="common">Sweet orange</name>
    <name type="synonym">Citrus aurantium var. sinensis</name>
    <dbReference type="NCBI Taxonomy" id="2711"/>
    <lineage>
        <taxon>Eukaryota</taxon>
        <taxon>Viridiplantae</taxon>
        <taxon>Streptophyta</taxon>
        <taxon>Embryophyta</taxon>
        <taxon>Tracheophyta</taxon>
        <taxon>Spermatophyta</taxon>
        <taxon>Magnoliopsida</taxon>
        <taxon>eudicotyledons</taxon>
        <taxon>Gunneridae</taxon>
        <taxon>Pentapetalae</taxon>
        <taxon>rosids</taxon>
        <taxon>malvids</taxon>
        <taxon>Sapindales</taxon>
        <taxon>Rutaceae</taxon>
        <taxon>Aurantioideae</taxon>
        <taxon>Citrus</taxon>
    </lineage>
</organism>
<keyword id="KW-0150">Chloroplast</keyword>
<keyword id="KW-0934">Plastid</keyword>
<keyword id="KW-0687">Ribonucleoprotein</keyword>
<keyword id="KW-0689">Ribosomal protein</keyword>
<keyword id="KW-0694">RNA-binding</keyword>
<keyword id="KW-0699">rRNA-binding</keyword>
<proteinExistence type="inferred from homology"/>
<dbReference type="EMBL" id="DQ864733">
    <property type="protein sequence ID" value="ABI49052.1"/>
    <property type="molecule type" value="Genomic_DNA"/>
</dbReference>
<dbReference type="RefSeq" id="YP_740509.1">
    <property type="nucleotide sequence ID" value="NC_008334.1"/>
</dbReference>
<dbReference type="SMR" id="Q09ME4"/>
<dbReference type="GeneID" id="4271185"/>
<dbReference type="KEGG" id="cit:4271185"/>
<dbReference type="OrthoDB" id="924556at71240"/>
<dbReference type="GO" id="GO:0009507">
    <property type="term" value="C:chloroplast"/>
    <property type="evidence" value="ECO:0007669"/>
    <property type="project" value="UniProtKB-SubCell"/>
</dbReference>
<dbReference type="GO" id="GO:1990904">
    <property type="term" value="C:ribonucleoprotein complex"/>
    <property type="evidence" value="ECO:0007669"/>
    <property type="project" value="UniProtKB-KW"/>
</dbReference>
<dbReference type="GO" id="GO:0005840">
    <property type="term" value="C:ribosome"/>
    <property type="evidence" value="ECO:0007669"/>
    <property type="project" value="UniProtKB-KW"/>
</dbReference>
<dbReference type="GO" id="GO:0019843">
    <property type="term" value="F:rRNA binding"/>
    <property type="evidence" value="ECO:0007669"/>
    <property type="project" value="UniProtKB-UniRule"/>
</dbReference>
<dbReference type="GO" id="GO:0003735">
    <property type="term" value="F:structural constituent of ribosome"/>
    <property type="evidence" value="ECO:0007669"/>
    <property type="project" value="InterPro"/>
</dbReference>
<dbReference type="GO" id="GO:0006412">
    <property type="term" value="P:translation"/>
    <property type="evidence" value="ECO:0007669"/>
    <property type="project" value="UniProtKB-UniRule"/>
</dbReference>
<dbReference type="FunFam" id="3.30.420.80:FF:000003">
    <property type="entry name" value="30S ribosomal protein S11, chloroplastic"/>
    <property type="match status" value="1"/>
</dbReference>
<dbReference type="Gene3D" id="3.30.420.80">
    <property type="entry name" value="Ribosomal protein S11"/>
    <property type="match status" value="1"/>
</dbReference>
<dbReference type="HAMAP" id="MF_01310">
    <property type="entry name" value="Ribosomal_uS11"/>
    <property type="match status" value="1"/>
</dbReference>
<dbReference type="InterPro" id="IPR001971">
    <property type="entry name" value="Ribosomal_uS11"/>
</dbReference>
<dbReference type="InterPro" id="IPR019981">
    <property type="entry name" value="Ribosomal_uS11_bac-type"/>
</dbReference>
<dbReference type="InterPro" id="IPR018102">
    <property type="entry name" value="Ribosomal_uS11_CS"/>
</dbReference>
<dbReference type="InterPro" id="IPR036967">
    <property type="entry name" value="Ribosomal_uS11_sf"/>
</dbReference>
<dbReference type="NCBIfam" id="NF003698">
    <property type="entry name" value="PRK05309.1"/>
    <property type="match status" value="1"/>
</dbReference>
<dbReference type="NCBIfam" id="TIGR03632">
    <property type="entry name" value="uS11_bact"/>
    <property type="match status" value="1"/>
</dbReference>
<dbReference type="PANTHER" id="PTHR11759">
    <property type="entry name" value="40S RIBOSOMAL PROTEIN S14/30S RIBOSOMAL PROTEIN S11"/>
    <property type="match status" value="1"/>
</dbReference>
<dbReference type="Pfam" id="PF00411">
    <property type="entry name" value="Ribosomal_S11"/>
    <property type="match status" value="1"/>
</dbReference>
<dbReference type="PIRSF" id="PIRSF002131">
    <property type="entry name" value="Ribosomal_S11"/>
    <property type="match status" value="1"/>
</dbReference>
<dbReference type="SUPFAM" id="SSF53137">
    <property type="entry name" value="Translational machinery components"/>
    <property type="match status" value="1"/>
</dbReference>
<dbReference type="PROSITE" id="PS00054">
    <property type="entry name" value="RIBOSOMAL_S11"/>
    <property type="match status" value="1"/>
</dbReference>
<evidence type="ECO:0000255" key="1">
    <source>
        <dbReference type="HAMAP-Rule" id="MF_01310"/>
    </source>
</evidence>
<evidence type="ECO:0000256" key="2">
    <source>
        <dbReference type="SAM" id="MobiDB-lite"/>
    </source>
</evidence>
<evidence type="ECO:0000305" key="3"/>
<comment type="subunit">
    <text evidence="1">Part of the 30S ribosomal subunit.</text>
</comment>
<comment type="subcellular location">
    <subcellularLocation>
        <location>Plastid</location>
        <location>Chloroplast</location>
    </subcellularLocation>
</comment>
<comment type="similarity">
    <text evidence="1">Belongs to the universal ribosomal protein uS11 family.</text>
</comment>
<name>RR11_CITSI</name>
<feature type="chain" id="PRO_0000276643" description="Small ribosomal subunit protein uS11c">
    <location>
        <begin position="1"/>
        <end position="138"/>
    </location>
</feature>
<feature type="region of interest" description="Disordered" evidence="2">
    <location>
        <begin position="1"/>
        <end position="24"/>
    </location>
</feature>
<feature type="compositionally biased region" description="Basic residues" evidence="2">
    <location>
        <begin position="9"/>
        <end position="24"/>
    </location>
</feature>
<reference key="1">
    <citation type="journal article" date="2006" name="BMC Plant Biol.">
        <title>The complete chloroplast genome sequence of Citrus sinensis (L.) Osbeck var 'Ridge Pineapple': organization and phylogenetic relationships to other angiosperms.</title>
        <authorList>
            <person name="Bausher M.G."/>
            <person name="Singh N.D."/>
            <person name="Lee S.-B."/>
            <person name="Jansen R.K."/>
            <person name="Daniell H."/>
        </authorList>
    </citation>
    <scope>NUCLEOTIDE SEQUENCE [LARGE SCALE GENOMIC DNA]</scope>
    <source>
        <strain>cv. Osbeck var. Ridge Pineapple</strain>
    </source>
</reference>
<gene>
    <name evidence="1" type="primary">rps11</name>
</gene>
<accession>Q09ME4</accession>
<protein>
    <recommendedName>
        <fullName evidence="1">Small ribosomal subunit protein uS11c</fullName>
    </recommendedName>
    <alternativeName>
        <fullName evidence="3">30S ribosomal protein S11, chloroplastic</fullName>
    </alternativeName>
</protein>